<name>ATPB_THEM4</name>
<protein>
    <recommendedName>
        <fullName evidence="1">ATP synthase subunit beta</fullName>
        <ecNumber evidence="1">7.1.2.2</ecNumber>
    </recommendedName>
    <alternativeName>
        <fullName evidence="1">ATP synthase F1 sector subunit beta</fullName>
    </alternativeName>
    <alternativeName>
        <fullName evidence="1">F-ATPase subunit beta</fullName>
    </alternativeName>
</protein>
<organism>
    <name type="scientific">Thermosipho melanesiensis (strain DSM 12029 / CIP 104789 / BI429)</name>
    <dbReference type="NCBI Taxonomy" id="391009"/>
    <lineage>
        <taxon>Bacteria</taxon>
        <taxon>Thermotogati</taxon>
        <taxon>Thermotogota</taxon>
        <taxon>Thermotogae</taxon>
        <taxon>Thermotogales</taxon>
        <taxon>Fervidobacteriaceae</taxon>
        <taxon>Thermosipho</taxon>
    </lineage>
</organism>
<evidence type="ECO:0000255" key="1">
    <source>
        <dbReference type="HAMAP-Rule" id="MF_01347"/>
    </source>
</evidence>
<feature type="chain" id="PRO_1000055176" description="ATP synthase subunit beta">
    <location>
        <begin position="1"/>
        <end position="469"/>
    </location>
</feature>
<feature type="binding site" evidence="1">
    <location>
        <begin position="155"/>
        <end position="162"/>
    </location>
    <ligand>
        <name>ATP</name>
        <dbReference type="ChEBI" id="CHEBI:30616"/>
    </ligand>
</feature>
<dbReference type="EC" id="7.1.2.2" evidence="1"/>
<dbReference type="EMBL" id="CP000716">
    <property type="protein sequence ID" value="ABR30162.1"/>
    <property type="molecule type" value="Genomic_DNA"/>
</dbReference>
<dbReference type="RefSeq" id="WP_012056523.1">
    <property type="nucleotide sequence ID" value="NC_009616.1"/>
</dbReference>
<dbReference type="SMR" id="A6LJR1"/>
<dbReference type="STRING" id="391009.Tmel_0290"/>
<dbReference type="KEGG" id="tme:Tmel_0290"/>
<dbReference type="eggNOG" id="COG0055">
    <property type="taxonomic scope" value="Bacteria"/>
</dbReference>
<dbReference type="HOGENOM" id="CLU_022398_0_2_0"/>
<dbReference type="OrthoDB" id="9801639at2"/>
<dbReference type="Proteomes" id="UP000001110">
    <property type="component" value="Chromosome"/>
</dbReference>
<dbReference type="GO" id="GO:0005886">
    <property type="term" value="C:plasma membrane"/>
    <property type="evidence" value="ECO:0007669"/>
    <property type="project" value="UniProtKB-SubCell"/>
</dbReference>
<dbReference type="GO" id="GO:0045259">
    <property type="term" value="C:proton-transporting ATP synthase complex"/>
    <property type="evidence" value="ECO:0007669"/>
    <property type="project" value="UniProtKB-KW"/>
</dbReference>
<dbReference type="GO" id="GO:0005524">
    <property type="term" value="F:ATP binding"/>
    <property type="evidence" value="ECO:0007669"/>
    <property type="project" value="UniProtKB-UniRule"/>
</dbReference>
<dbReference type="GO" id="GO:0016887">
    <property type="term" value="F:ATP hydrolysis activity"/>
    <property type="evidence" value="ECO:0007669"/>
    <property type="project" value="InterPro"/>
</dbReference>
<dbReference type="GO" id="GO:0046933">
    <property type="term" value="F:proton-transporting ATP synthase activity, rotational mechanism"/>
    <property type="evidence" value="ECO:0007669"/>
    <property type="project" value="UniProtKB-UniRule"/>
</dbReference>
<dbReference type="CDD" id="cd18110">
    <property type="entry name" value="ATP-synt_F1_beta_C"/>
    <property type="match status" value="1"/>
</dbReference>
<dbReference type="CDD" id="cd18115">
    <property type="entry name" value="ATP-synt_F1_beta_N"/>
    <property type="match status" value="1"/>
</dbReference>
<dbReference type="CDD" id="cd01133">
    <property type="entry name" value="F1-ATPase_beta_CD"/>
    <property type="match status" value="1"/>
</dbReference>
<dbReference type="FunFam" id="1.10.1140.10:FF:000001">
    <property type="entry name" value="ATP synthase subunit beta"/>
    <property type="match status" value="1"/>
</dbReference>
<dbReference type="FunFam" id="2.40.10.170:FF:000005">
    <property type="entry name" value="ATP synthase subunit beta"/>
    <property type="match status" value="1"/>
</dbReference>
<dbReference type="FunFam" id="3.40.50.300:FF:000004">
    <property type="entry name" value="ATP synthase subunit beta"/>
    <property type="match status" value="1"/>
</dbReference>
<dbReference type="Gene3D" id="2.40.10.170">
    <property type="match status" value="1"/>
</dbReference>
<dbReference type="Gene3D" id="1.10.1140.10">
    <property type="entry name" value="Bovine Mitochondrial F1-atpase, Atp Synthase Beta Chain, Chain D, domain 3"/>
    <property type="match status" value="1"/>
</dbReference>
<dbReference type="Gene3D" id="3.40.50.300">
    <property type="entry name" value="P-loop containing nucleotide triphosphate hydrolases"/>
    <property type="match status" value="1"/>
</dbReference>
<dbReference type="HAMAP" id="MF_01347">
    <property type="entry name" value="ATP_synth_beta_bact"/>
    <property type="match status" value="1"/>
</dbReference>
<dbReference type="InterPro" id="IPR003593">
    <property type="entry name" value="AAA+_ATPase"/>
</dbReference>
<dbReference type="InterPro" id="IPR055190">
    <property type="entry name" value="ATP-synt_VA_C"/>
</dbReference>
<dbReference type="InterPro" id="IPR005722">
    <property type="entry name" value="ATP_synth_F1_bsu"/>
</dbReference>
<dbReference type="InterPro" id="IPR020003">
    <property type="entry name" value="ATPase_a/bsu_AS"/>
</dbReference>
<dbReference type="InterPro" id="IPR050053">
    <property type="entry name" value="ATPase_alpha/beta_chains"/>
</dbReference>
<dbReference type="InterPro" id="IPR004100">
    <property type="entry name" value="ATPase_F1/V1/A1_a/bsu_N"/>
</dbReference>
<dbReference type="InterPro" id="IPR036121">
    <property type="entry name" value="ATPase_F1/V1/A1_a/bsu_N_sf"/>
</dbReference>
<dbReference type="InterPro" id="IPR000194">
    <property type="entry name" value="ATPase_F1/V1/A1_a/bsu_nucl-bd"/>
</dbReference>
<dbReference type="InterPro" id="IPR024034">
    <property type="entry name" value="ATPase_F1/V1_b/a_C"/>
</dbReference>
<dbReference type="InterPro" id="IPR027417">
    <property type="entry name" value="P-loop_NTPase"/>
</dbReference>
<dbReference type="NCBIfam" id="TIGR01039">
    <property type="entry name" value="atpD"/>
    <property type="match status" value="1"/>
</dbReference>
<dbReference type="PANTHER" id="PTHR15184">
    <property type="entry name" value="ATP SYNTHASE"/>
    <property type="match status" value="1"/>
</dbReference>
<dbReference type="PANTHER" id="PTHR15184:SF71">
    <property type="entry name" value="ATP SYNTHASE SUBUNIT BETA, MITOCHONDRIAL"/>
    <property type="match status" value="1"/>
</dbReference>
<dbReference type="Pfam" id="PF00006">
    <property type="entry name" value="ATP-synt_ab"/>
    <property type="match status" value="1"/>
</dbReference>
<dbReference type="Pfam" id="PF02874">
    <property type="entry name" value="ATP-synt_ab_N"/>
    <property type="match status" value="1"/>
</dbReference>
<dbReference type="Pfam" id="PF22919">
    <property type="entry name" value="ATP-synt_VA_C"/>
    <property type="match status" value="1"/>
</dbReference>
<dbReference type="SMART" id="SM00382">
    <property type="entry name" value="AAA"/>
    <property type="match status" value="1"/>
</dbReference>
<dbReference type="SUPFAM" id="SSF47917">
    <property type="entry name" value="C-terminal domain of alpha and beta subunits of F1 ATP synthase"/>
    <property type="match status" value="1"/>
</dbReference>
<dbReference type="SUPFAM" id="SSF50615">
    <property type="entry name" value="N-terminal domain of alpha and beta subunits of F1 ATP synthase"/>
    <property type="match status" value="1"/>
</dbReference>
<dbReference type="SUPFAM" id="SSF52540">
    <property type="entry name" value="P-loop containing nucleoside triphosphate hydrolases"/>
    <property type="match status" value="1"/>
</dbReference>
<dbReference type="PROSITE" id="PS00152">
    <property type="entry name" value="ATPASE_ALPHA_BETA"/>
    <property type="match status" value="1"/>
</dbReference>
<sequence length="469" mass="51703">MSKRSKGKILRVIGPVVDVQFEEGELPDIYDALEVINPQTGKKLILEVEQLIGDNAVRTVALDTTDGLMRGLEVENTGEPIKVPVGKGALGRMFNVIGEPIDGKEDVKDVEYWPIHRTPPSITEQSTSVEILETGIKVIDLLAPFPKGGKIGFFGGAGVGKTVLVMELIRNIAIEHHGFSMFAGVGERTREGNELYLDMQEAEVLDNTVLVFGQMNEPPGARFRVALSALTMAEYFRDVEGRDVLLFIDNIFRFVQAGSEVSALLGRMPSAVGYQPTLATDMGELQERITSTKKGSITSVQAIYVPADDITDPAPATTFTHLDATVVLSRRRAALGLYPAVDPLDSTSKMLDPNVVGQEHYEVARGVQEVLQRYKDLQDIIAILGMEELSEEDKLIVQRARKIERFLSQPVHVAEKFSNIPGKYVPISETIRGFKEILEGKYDDLPEMAFYMVGTIDEAVEKAKKLQKA</sequence>
<gene>
    <name evidence="1" type="primary">atpD</name>
    <name type="ordered locus">Tmel_0290</name>
</gene>
<reference key="1">
    <citation type="submission" date="2007-05" db="EMBL/GenBank/DDBJ databases">
        <title>Complete sequence of Thermosipho melanesiensis BI429.</title>
        <authorList>
            <consortium name="US DOE Joint Genome Institute"/>
            <person name="Copeland A."/>
            <person name="Lucas S."/>
            <person name="Lapidus A."/>
            <person name="Barry K."/>
            <person name="Glavina del Rio T."/>
            <person name="Dalin E."/>
            <person name="Tice H."/>
            <person name="Pitluck S."/>
            <person name="Chertkov O."/>
            <person name="Brettin T."/>
            <person name="Bruce D."/>
            <person name="Detter J.C."/>
            <person name="Han C."/>
            <person name="Schmutz J."/>
            <person name="Larimer F."/>
            <person name="Land M."/>
            <person name="Hauser L."/>
            <person name="Kyrpides N."/>
            <person name="Mikhailova N."/>
            <person name="Nelson K."/>
            <person name="Gogarten J.P."/>
            <person name="Noll K."/>
            <person name="Richardson P."/>
        </authorList>
    </citation>
    <scope>NUCLEOTIDE SEQUENCE [LARGE SCALE GENOMIC DNA]</scope>
    <source>
        <strain>DSM 12029 / CIP 104789 / BI429</strain>
    </source>
</reference>
<accession>A6LJR1</accession>
<comment type="function">
    <text evidence="1">Produces ATP from ADP in the presence of a proton gradient across the membrane. The catalytic sites are hosted primarily by the beta subunits.</text>
</comment>
<comment type="catalytic activity">
    <reaction evidence="1">
        <text>ATP + H2O + 4 H(+)(in) = ADP + phosphate + 5 H(+)(out)</text>
        <dbReference type="Rhea" id="RHEA:57720"/>
        <dbReference type="ChEBI" id="CHEBI:15377"/>
        <dbReference type="ChEBI" id="CHEBI:15378"/>
        <dbReference type="ChEBI" id="CHEBI:30616"/>
        <dbReference type="ChEBI" id="CHEBI:43474"/>
        <dbReference type="ChEBI" id="CHEBI:456216"/>
        <dbReference type="EC" id="7.1.2.2"/>
    </reaction>
</comment>
<comment type="subunit">
    <text evidence="1">F-type ATPases have 2 components, CF(1) - the catalytic core - and CF(0) - the membrane proton channel. CF(1) has five subunits: alpha(3), beta(3), gamma(1), delta(1), epsilon(1). CF(0) has three main subunits: a(1), b(2) and c(9-12). The alpha and beta chains form an alternating ring which encloses part of the gamma chain. CF(1) is attached to CF(0) by a central stalk formed by the gamma and epsilon chains, while a peripheral stalk is formed by the delta and b chains.</text>
</comment>
<comment type="subcellular location">
    <subcellularLocation>
        <location evidence="1">Cell inner membrane</location>
        <topology evidence="1">Peripheral membrane protein</topology>
    </subcellularLocation>
</comment>
<comment type="similarity">
    <text evidence="1">Belongs to the ATPase alpha/beta chains family.</text>
</comment>
<keyword id="KW-0066">ATP synthesis</keyword>
<keyword id="KW-0067">ATP-binding</keyword>
<keyword id="KW-0997">Cell inner membrane</keyword>
<keyword id="KW-1003">Cell membrane</keyword>
<keyword id="KW-0139">CF(1)</keyword>
<keyword id="KW-0375">Hydrogen ion transport</keyword>
<keyword id="KW-0406">Ion transport</keyword>
<keyword id="KW-0472">Membrane</keyword>
<keyword id="KW-0547">Nucleotide-binding</keyword>
<keyword id="KW-1278">Translocase</keyword>
<keyword id="KW-0813">Transport</keyword>
<proteinExistence type="inferred from homology"/>